<evidence type="ECO:0000255" key="1">
    <source>
        <dbReference type="HAMAP-Rule" id="MF_00046"/>
    </source>
</evidence>
<organism>
    <name type="scientific">Nitrosomonas eutropha (strain DSM 101675 / C91 / Nm57)</name>
    <dbReference type="NCBI Taxonomy" id="335283"/>
    <lineage>
        <taxon>Bacteria</taxon>
        <taxon>Pseudomonadati</taxon>
        <taxon>Pseudomonadota</taxon>
        <taxon>Betaproteobacteria</taxon>
        <taxon>Nitrosomonadales</taxon>
        <taxon>Nitrosomonadaceae</taxon>
        <taxon>Nitrosomonas</taxon>
    </lineage>
</organism>
<keyword id="KW-0067">ATP-binding</keyword>
<keyword id="KW-0131">Cell cycle</keyword>
<keyword id="KW-0132">Cell division</keyword>
<keyword id="KW-0133">Cell shape</keyword>
<keyword id="KW-0961">Cell wall biogenesis/degradation</keyword>
<keyword id="KW-0963">Cytoplasm</keyword>
<keyword id="KW-0436">Ligase</keyword>
<keyword id="KW-0547">Nucleotide-binding</keyword>
<keyword id="KW-0573">Peptidoglycan synthesis</keyword>
<name>MURC_NITEC</name>
<comment type="function">
    <text evidence="1">Cell wall formation.</text>
</comment>
<comment type="catalytic activity">
    <reaction evidence="1">
        <text>UDP-N-acetyl-alpha-D-muramate + L-alanine + ATP = UDP-N-acetyl-alpha-D-muramoyl-L-alanine + ADP + phosphate + H(+)</text>
        <dbReference type="Rhea" id="RHEA:23372"/>
        <dbReference type="ChEBI" id="CHEBI:15378"/>
        <dbReference type="ChEBI" id="CHEBI:30616"/>
        <dbReference type="ChEBI" id="CHEBI:43474"/>
        <dbReference type="ChEBI" id="CHEBI:57972"/>
        <dbReference type="ChEBI" id="CHEBI:70757"/>
        <dbReference type="ChEBI" id="CHEBI:83898"/>
        <dbReference type="ChEBI" id="CHEBI:456216"/>
        <dbReference type="EC" id="6.3.2.8"/>
    </reaction>
</comment>
<comment type="pathway">
    <text evidence="1">Cell wall biogenesis; peptidoglycan biosynthesis.</text>
</comment>
<comment type="subcellular location">
    <subcellularLocation>
        <location evidence="1">Cytoplasm</location>
    </subcellularLocation>
</comment>
<comment type="similarity">
    <text evidence="1">Belongs to the MurCDEF family.</text>
</comment>
<accession>Q0AJE2</accession>
<feature type="chain" id="PRO_1000004378" description="UDP-N-acetylmuramate--L-alanine ligase">
    <location>
        <begin position="1"/>
        <end position="473"/>
    </location>
</feature>
<feature type="binding site" evidence="1">
    <location>
        <begin position="112"/>
        <end position="118"/>
    </location>
    <ligand>
        <name>ATP</name>
        <dbReference type="ChEBI" id="CHEBI:30616"/>
    </ligand>
</feature>
<gene>
    <name evidence="1" type="primary">murC</name>
    <name type="ordered locus">Neut_0245</name>
</gene>
<dbReference type="EC" id="6.3.2.8" evidence="1"/>
<dbReference type="EMBL" id="CP000450">
    <property type="protein sequence ID" value="ABI58529.1"/>
    <property type="molecule type" value="Genomic_DNA"/>
</dbReference>
<dbReference type="RefSeq" id="WP_011633373.1">
    <property type="nucleotide sequence ID" value="NC_008344.1"/>
</dbReference>
<dbReference type="SMR" id="Q0AJE2"/>
<dbReference type="STRING" id="335283.Neut_0245"/>
<dbReference type="KEGG" id="net:Neut_0245"/>
<dbReference type="eggNOG" id="COG0773">
    <property type="taxonomic scope" value="Bacteria"/>
</dbReference>
<dbReference type="HOGENOM" id="CLU_028104_2_2_4"/>
<dbReference type="OrthoDB" id="9804126at2"/>
<dbReference type="UniPathway" id="UPA00219"/>
<dbReference type="Proteomes" id="UP000001966">
    <property type="component" value="Chromosome"/>
</dbReference>
<dbReference type="GO" id="GO:0005737">
    <property type="term" value="C:cytoplasm"/>
    <property type="evidence" value="ECO:0007669"/>
    <property type="project" value="UniProtKB-SubCell"/>
</dbReference>
<dbReference type="GO" id="GO:0005524">
    <property type="term" value="F:ATP binding"/>
    <property type="evidence" value="ECO:0007669"/>
    <property type="project" value="UniProtKB-UniRule"/>
</dbReference>
<dbReference type="GO" id="GO:0008763">
    <property type="term" value="F:UDP-N-acetylmuramate-L-alanine ligase activity"/>
    <property type="evidence" value="ECO:0007669"/>
    <property type="project" value="UniProtKB-UniRule"/>
</dbReference>
<dbReference type="GO" id="GO:0051301">
    <property type="term" value="P:cell division"/>
    <property type="evidence" value="ECO:0007669"/>
    <property type="project" value="UniProtKB-KW"/>
</dbReference>
<dbReference type="GO" id="GO:0071555">
    <property type="term" value="P:cell wall organization"/>
    <property type="evidence" value="ECO:0007669"/>
    <property type="project" value="UniProtKB-KW"/>
</dbReference>
<dbReference type="GO" id="GO:0009252">
    <property type="term" value="P:peptidoglycan biosynthetic process"/>
    <property type="evidence" value="ECO:0007669"/>
    <property type="project" value="UniProtKB-UniRule"/>
</dbReference>
<dbReference type="GO" id="GO:0008360">
    <property type="term" value="P:regulation of cell shape"/>
    <property type="evidence" value="ECO:0007669"/>
    <property type="project" value="UniProtKB-KW"/>
</dbReference>
<dbReference type="Gene3D" id="3.90.190.20">
    <property type="entry name" value="Mur ligase, C-terminal domain"/>
    <property type="match status" value="1"/>
</dbReference>
<dbReference type="Gene3D" id="3.40.1190.10">
    <property type="entry name" value="Mur-like, catalytic domain"/>
    <property type="match status" value="1"/>
</dbReference>
<dbReference type="Gene3D" id="3.40.50.720">
    <property type="entry name" value="NAD(P)-binding Rossmann-like Domain"/>
    <property type="match status" value="1"/>
</dbReference>
<dbReference type="HAMAP" id="MF_00046">
    <property type="entry name" value="MurC"/>
    <property type="match status" value="1"/>
</dbReference>
<dbReference type="InterPro" id="IPR036565">
    <property type="entry name" value="Mur-like_cat_sf"/>
</dbReference>
<dbReference type="InterPro" id="IPR004101">
    <property type="entry name" value="Mur_ligase_C"/>
</dbReference>
<dbReference type="InterPro" id="IPR036615">
    <property type="entry name" value="Mur_ligase_C_dom_sf"/>
</dbReference>
<dbReference type="InterPro" id="IPR013221">
    <property type="entry name" value="Mur_ligase_cen"/>
</dbReference>
<dbReference type="InterPro" id="IPR000713">
    <property type="entry name" value="Mur_ligase_N"/>
</dbReference>
<dbReference type="InterPro" id="IPR050061">
    <property type="entry name" value="MurCDEF_pg_biosynth"/>
</dbReference>
<dbReference type="InterPro" id="IPR005758">
    <property type="entry name" value="UDP-N-AcMur_Ala_ligase_MurC"/>
</dbReference>
<dbReference type="NCBIfam" id="TIGR01082">
    <property type="entry name" value="murC"/>
    <property type="match status" value="1"/>
</dbReference>
<dbReference type="PANTHER" id="PTHR43445:SF3">
    <property type="entry name" value="UDP-N-ACETYLMURAMATE--L-ALANINE LIGASE"/>
    <property type="match status" value="1"/>
</dbReference>
<dbReference type="PANTHER" id="PTHR43445">
    <property type="entry name" value="UDP-N-ACETYLMURAMATE--L-ALANINE LIGASE-RELATED"/>
    <property type="match status" value="1"/>
</dbReference>
<dbReference type="Pfam" id="PF01225">
    <property type="entry name" value="Mur_ligase"/>
    <property type="match status" value="1"/>
</dbReference>
<dbReference type="Pfam" id="PF02875">
    <property type="entry name" value="Mur_ligase_C"/>
    <property type="match status" value="1"/>
</dbReference>
<dbReference type="Pfam" id="PF08245">
    <property type="entry name" value="Mur_ligase_M"/>
    <property type="match status" value="1"/>
</dbReference>
<dbReference type="SUPFAM" id="SSF51984">
    <property type="entry name" value="MurCD N-terminal domain"/>
    <property type="match status" value="1"/>
</dbReference>
<dbReference type="SUPFAM" id="SSF53623">
    <property type="entry name" value="MurD-like peptide ligases, catalytic domain"/>
    <property type="match status" value="1"/>
</dbReference>
<dbReference type="SUPFAM" id="SSF53244">
    <property type="entry name" value="MurD-like peptide ligases, peptide-binding domain"/>
    <property type="match status" value="1"/>
</dbReference>
<reference key="1">
    <citation type="journal article" date="2007" name="Environ. Microbiol.">
        <title>Whole-genome analysis of the ammonia-oxidizing bacterium, Nitrosomonas eutropha C91: implications for niche adaptation.</title>
        <authorList>
            <person name="Stein L.Y."/>
            <person name="Arp D.J."/>
            <person name="Berube P.M."/>
            <person name="Chain P.S."/>
            <person name="Hauser L."/>
            <person name="Jetten M.S."/>
            <person name="Klotz M.G."/>
            <person name="Larimer F.W."/>
            <person name="Norton J.M."/>
            <person name="Op den Camp H.J.M."/>
            <person name="Shin M."/>
            <person name="Wei X."/>
        </authorList>
    </citation>
    <scope>NUCLEOTIDE SEQUENCE [LARGE SCALE GENOMIC DNA]</scope>
    <source>
        <strain>DSM 101675 / C91 / Nm57</strain>
    </source>
</reference>
<sequence length="473" mass="51322">MKHKIKHIHFVGIGGSGMGGIAEVLINQGFQISGSDLNGNSTTKRLQCLGAVIHHTHAAENIQSADAVVISTAIQPDNPEVIAARERRIPVVPRAMMLAELLRLHQGIAIAGTHGKTTTTSLVASILAEAGQDPTFVIGGRLKTVDSHARLGKGEFIVVEADESDASFLYLQPVLTVVTNIDADHMSTYEHDFNRLKQTFVEFIEHLPFYGMAVLCADDPHVSAIIPMVSKQVTTYGITSENAQIRATDIRHDQCKMHFCAHIGVNGSARTLDITLNLPGKHNVLNALAAIAVGNELNIPDEAMVKALATFGGVDRRFQQYGEIRLPDRRSFTLIDDYGHHPAEIAATMAAARNAFPGRRLVLVFQPHRYSRTRDLFEDFVRVLSSADALLLTEIYSAGEEPIIAADSKSLVRAIRVQGKIEPIYIEHINELKSAVHTVVQEGDVVLIMGAGSIGKIAPGLAEPTMKLTLITG</sequence>
<protein>
    <recommendedName>
        <fullName evidence="1">UDP-N-acetylmuramate--L-alanine ligase</fullName>
        <ecNumber evidence="1">6.3.2.8</ecNumber>
    </recommendedName>
    <alternativeName>
        <fullName evidence="1">UDP-N-acetylmuramoyl-L-alanine synthetase</fullName>
    </alternativeName>
</protein>
<proteinExistence type="inferred from homology"/>